<name>Y3092_BURM9</name>
<comment type="subcellular location">
    <subcellularLocation>
        <location evidence="1">Cytoplasm</location>
    </subcellularLocation>
</comment>
<comment type="similarity">
    <text evidence="1">Belongs to the TACO1 family.</text>
</comment>
<organism>
    <name type="scientific">Burkholderia mallei (strain NCTC 10229)</name>
    <dbReference type="NCBI Taxonomy" id="412022"/>
    <lineage>
        <taxon>Bacteria</taxon>
        <taxon>Pseudomonadati</taxon>
        <taxon>Pseudomonadota</taxon>
        <taxon>Betaproteobacteria</taxon>
        <taxon>Burkholderiales</taxon>
        <taxon>Burkholderiaceae</taxon>
        <taxon>Burkholderia</taxon>
        <taxon>pseudomallei group</taxon>
    </lineage>
</organism>
<sequence length="242" mass="26122">MAGHSKWANIKHKKAAADAKRGKIWTRLIKEIQVAARLGGGDVNSNPRLRLAVDKAADANMPKDNVKRAIDRGVGGADGANYEEIRYEGYGIGGAAIIVDTLTDNRTRTVAEVRHAFSKFGGNMGTDGSVAFMFDHVGQFLFAPGTSEDALMEAALEAGANDVNTNDDGSIEVLCDWQEFSKVKDALEAAGFKAELAEVTMKPQNEVDFTGEDAVKMQKLLDALENLDDVQEVYTNAVVVEE</sequence>
<keyword id="KW-0963">Cytoplasm</keyword>
<keyword id="KW-0238">DNA-binding</keyword>
<keyword id="KW-0804">Transcription</keyword>
<keyword id="KW-0805">Transcription regulation</keyword>
<feature type="chain" id="PRO_1000045283" description="Probable transcriptional regulatory protein BMA10229_A0792">
    <location>
        <begin position="1"/>
        <end position="242"/>
    </location>
</feature>
<accession>A2S4B3</accession>
<dbReference type="EMBL" id="CP000546">
    <property type="protein sequence ID" value="ABN03170.1"/>
    <property type="molecule type" value="Genomic_DNA"/>
</dbReference>
<dbReference type="RefSeq" id="WP_004185607.1">
    <property type="nucleotide sequence ID" value="NC_008836.1"/>
</dbReference>
<dbReference type="SMR" id="A2S4B3"/>
<dbReference type="KEGG" id="bml:BMA10229_A0792"/>
<dbReference type="HOGENOM" id="CLU_062974_2_2_4"/>
<dbReference type="Proteomes" id="UP000002283">
    <property type="component" value="Chromosome I"/>
</dbReference>
<dbReference type="GO" id="GO:0005829">
    <property type="term" value="C:cytosol"/>
    <property type="evidence" value="ECO:0007669"/>
    <property type="project" value="TreeGrafter"/>
</dbReference>
<dbReference type="GO" id="GO:0003677">
    <property type="term" value="F:DNA binding"/>
    <property type="evidence" value="ECO:0007669"/>
    <property type="project" value="UniProtKB-UniRule"/>
</dbReference>
<dbReference type="GO" id="GO:0006355">
    <property type="term" value="P:regulation of DNA-templated transcription"/>
    <property type="evidence" value="ECO:0007669"/>
    <property type="project" value="UniProtKB-UniRule"/>
</dbReference>
<dbReference type="FunFam" id="1.10.10.200:FF:000001">
    <property type="entry name" value="Probable transcriptional regulatory protein YebC"/>
    <property type="match status" value="1"/>
</dbReference>
<dbReference type="FunFam" id="3.30.70.980:FF:000002">
    <property type="entry name" value="Probable transcriptional regulatory protein YebC"/>
    <property type="match status" value="1"/>
</dbReference>
<dbReference type="Gene3D" id="1.10.10.200">
    <property type="match status" value="1"/>
</dbReference>
<dbReference type="Gene3D" id="3.30.70.980">
    <property type="match status" value="2"/>
</dbReference>
<dbReference type="HAMAP" id="MF_00693">
    <property type="entry name" value="Transcrip_reg_TACO1"/>
    <property type="match status" value="1"/>
</dbReference>
<dbReference type="InterPro" id="IPR017856">
    <property type="entry name" value="Integrase-like_N"/>
</dbReference>
<dbReference type="InterPro" id="IPR048300">
    <property type="entry name" value="TACO1_YebC-like_2nd/3rd_dom"/>
</dbReference>
<dbReference type="InterPro" id="IPR049083">
    <property type="entry name" value="TACO1_YebC_N"/>
</dbReference>
<dbReference type="InterPro" id="IPR002876">
    <property type="entry name" value="Transcrip_reg_TACO1-like"/>
</dbReference>
<dbReference type="InterPro" id="IPR026564">
    <property type="entry name" value="Transcrip_reg_TACO1-like_dom3"/>
</dbReference>
<dbReference type="InterPro" id="IPR029072">
    <property type="entry name" value="YebC-like"/>
</dbReference>
<dbReference type="NCBIfam" id="NF001030">
    <property type="entry name" value="PRK00110.1"/>
    <property type="match status" value="1"/>
</dbReference>
<dbReference type="NCBIfam" id="NF009044">
    <property type="entry name" value="PRK12378.1"/>
    <property type="match status" value="1"/>
</dbReference>
<dbReference type="NCBIfam" id="TIGR01033">
    <property type="entry name" value="YebC/PmpR family DNA-binding transcriptional regulator"/>
    <property type="match status" value="1"/>
</dbReference>
<dbReference type="PANTHER" id="PTHR12532:SF6">
    <property type="entry name" value="TRANSCRIPTIONAL REGULATORY PROTEIN YEBC-RELATED"/>
    <property type="match status" value="1"/>
</dbReference>
<dbReference type="PANTHER" id="PTHR12532">
    <property type="entry name" value="TRANSLATIONAL ACTIVATOR OF CYTOCHROME C OXIDASE 1"/>
    <property type="match status" value="1"/>
</dbReference>
<dbReference type="Pfam" id="PF20772">
    <property type="entry name" value="TACO1_YebC_N"/>
    <property type="match status" value="1"/>
</dbReference>
<dbReference type="Pfam" id="PF01709">
    <property type="entry name" value="Transcrip_reg"/>
    <property type="match status" value="1"/>
</dbReference>
<dbReference type="SUPFAM" id="SSF75625">
    <property type="entry name" value="YebC-like"/>
    <property type="match status" value="1"/>
</dbReference>
<reference key="1">
    <citation type="journal article" date="2010" name="Genome Biol. Evol.">
        <title>Continuing evolution of Burkholderia mallei through genome reduction and large-scale rearrangements.</title>
        <authorList>
            <person name="Losada L."/>
            <person name="Ronning C.M."/>
            <person name="DeShazer D."/>
            <person name="Woods D."/>
            <person name="Fedorova N."/>
            <person name="Kim H.S."/>
            <person name="Shabalina S.A."/>
            <person name="Pearson T.R."/>
            <person name="Brinkac L."/>
            <person name="Tan P."/>
            <person name="Nandi T."/>
            <person name="Crabtree J."/>
            <person name="Badger J."/>
            <person name="Beckstrom-Sternberg S."/>
            <person name="Saqib M."/>
            <person name="Schutzer S.E."/>
            <person name="Keim P."/>
            <person name="Nierman W.C."/>
        </authorList>
    </citation>
    <scope>NUCLEOTIDE SEQUENCE [LARGE SCALE GENOMIC DNA]</scope>
    <source>
        <strain>NCTC 10229</strain>
    </source>
</reference>
<evidence type="ECO:0000255" key="1">
    <source>
        <dbReference type="HAMAP-Rule" id="MF_00693"/>
    </source>
</evidence>
<protein>
    <recommendedName>
        <fullName evidence="1">Probable transcriptional regulatory protein BMA10229_A0792</fullName>
    </recommendedName>
</protein>
<gene>
    <name type="ordered locus">BMA10229_A0792</name>
</gene>
<proteinExistence type="inferred from homology"/>